<evidence type="ECO:0000250" key="1">
    <source>
        <dbReference type="UniProtKB" id="Q9Y749"/>
    </source>
</evidence>
<evidence type="ECO:0000255" key="2"/>
<evidence type="ECO:0000255" key="3">
    <source>
        <dbReference type="PROSITE-ProRule" id="PRU00498"/>
    </source>
</evidence>
<evidence type="ECO:0000255" key="4">
    <source>
        <dbReference type="PROSITE-ProRule" id="PRU01240"/>
    </source>
</evidence>
<evidence type="ECO:0000255" key="5">
    <source>
        <dbReference type="RuleBase" id="RU003355"/>
    </source>
</evidence>
<evidence type="ECO:0000269" key="6">
    <source>
    </source>
</evidence>
<evidence type="ECO:0000303" key="7">
    <source>
    </source>
</evidence>
<evidence type="ECO:0000305" key="8"/>
<evidence type="ECO:0000305" key="9">
    <source>
    </source>
</evidence>
<evidence type="ECO:0000312" key="10">
    <source>
        <dbReference type="EMBL" id="AAT37679.1"/>
    </source>
</evidence>
<sequence>TMELLEDLIEQVRQLPMVNFIEKNSLVHANEFTVAKGAPWGLARISHRDPLSLGSFDQYLYDSNGGTGVTSYVIDTGVNVHHEQFEGRAKWGKTIPQGDEDEDGNGHGTHCAGTIGSNAYGVAKNAEIVAVKVLRSNGSGSMSDVIKGVEFAVKSHQDSVKKGKNSFSTANMSLGGGKSPALDLAVNAAVKAGLHFAVAAGNENQDACNTSPASAENAITVGASTISDARAYFSNYGKCVDIFAPGLNILSTYIGSDAATAYLSGTSMASPHIAGLLTYYLSLQPSSDSEFFIGAEGITPAQLKKNLIAFGTPDVLADIPADTPNILAFNGAGQNLTKFWGH</sequence>
<protein>
    <recommendedName>
        <fullName evidence="8">Subtilisin-like serine protease Rho m 2.0101</fullName>
        <ecNumber evidence="1">3.4.21.-</ecNumber>
    </recommendedName>
    <alternativeName>
        <fullName evidence="7 10">Vacuolar serine protease</fullName>
    </alternativeName>
    <allergenName evidence="8">Rho m 2.0101</allergenName>
</protein>
<name>RM201_RHOMI</name>
<organism evidence="10">
    <name type="scientific">Rhodotorula mucilaginosa</name>
    <name type="common">Yeast</name>
    <name type="synonym">Rhodotorula rubra</name>
    <dbReference type="NCBI Taxonomy" id="5537"/>
    <lineage>
        <taxon>Eukaryota</taxon>
        <taxon>Fungi</taxon>
        <taxon>Dikarya</taxon>
        <taxon>Basidiomycota</taxon>
        <taxon>Pucciniomycotina</taxon>
        <taxon>Microbotryomycetes</taxon>
        <taxon>Sporidiobolales</taxon>
        <taxon>Sporidiobolaceae</taxon>
        <taxon>Rhodotorula</taxon>
    </lineage>
</organism>
<feature type="propeptide" id="PRO_0000447002" description="Removed in mature form" evidence="9">
    <location>
        <begin position="1" status="less than"/>
        <end position="30"/>
    </location>
</feature>
<feature type="chain" id="PRO_0000447003" description="Subtilisin-like serine protease Rho m 2.0101" evidence="9">
    <location>
        <begin position="31"/>
        <end position="342"/>
    </location>
</feature>
<feature type="domain" description="Inhibitor I9" evidence="8">
    <location>
        <begin position="1" status="less than"/>
        <end position="30"/>
    </location>
</feature>
<feature type="domain" description="Peptidase S8" evidence="4">
    <location>
        <begin position="39"/>
        <end position="342"/>
    </location>
</feature>
<feature type="active site" description="Charge relay system" evidence="4">
    <location>
        <position position="75"/>
    </location>
</feature>
<feature type="active site" description="Charge relay system" evidence="4">
    <location>
        <position position="107"/>
    </location>
</feature>
<feature type="active site" description="Charge relay system" evidence="4">
    <location>
        <position position="267"/>
    </location>
</feature>
<feature type="glycosylation site" description="N-linked (GlcNAc...) asparagine" evidence="3">
    <location>
        <position position="137"/>
    </location>
</feature>
<feature type="glycosylation site" description="N-linked (GlcNAc...) asparagine" evidence="3">
    <location>
        <position position="171"/>
    </location>
</feature>
<feature type="glycosylation site" description="N-linked (GlcNAc...) asparagine" evidence="3">
    <location>
        <position position="335"/>
    </location>
</feature>
<feature type="sequence conflict" description="In Ref. 1; AA sequence." evidence="8" ref="1">
    <original>N</original>
    <variation>S</variation>
    <location>
        <position position="137"/>
    </location>
</feature>
<feature type="sequence conflict" description="In Ref. 1; AA sequence." evidence="8" ref="1">
    <original>S</original>
    <variation>T</variation>
    <location>
        <position position="141"/>
    </location>
</feature>
<feature type="sequence conflict" description="In Ref. 1; AA sequence." evidence="8" ref="1">
    <original>I</original>
    <variation>L</variation>
    <location>
        <position position="146"/>
    </location>
</feature>
<feature type="sequence conflict" description="In Ref. 1; AA sequence." evidence="8" ref="1">
    <original>I</original>
    <variation>V</variation>
    <location>
        <position position="146"/>
    </location>
</feature>
<feature type="non-terminal residue" evidence="8 10">
    <location>
        <position position="1"/>
    </location>
</feature>
<dbReference type="EC" id="3.4.21.-" evidence="1"/>
<dbReference type="EMBL" id="AY547285">
    <property type="protein sequence ID" value="AAT37679.1"/>
    <property type="molecule type" value="mRNA"/>
</dbReference>
<dbReference type="SMR" id="Q32ZM1"/>
<dbReference type="Allergome" id="2413">
    <property type="allergen name" value="Rho m 2"/>
</dbReference>
<dbReference type="Allergome" id="3466">
    <property type="allergen name" value="Rho m 2.0101"/>
</dbReference>
<dbReference type="GO" id="GO:0005615">
    <property type="term" value="C:extracellular space"/>
    <property type="evidence" value="ECO:0007669"/>
    <property type="project" value="TreeGrafter"/>
</dbReference>
<dbReference type="GO" id="GO:0004252">
    <property type="term" value="F:serine-type endopeptidase activity"/>
    <property type="evidence" value="ECO:0000250"/>
    <property type="project" value="UniProtKB"/>
</dbReference>
<dbReference type="GO" id="GO:0006508">
    <property type="term" value="P:proteolysis"/>
    <property type="evidence" value="ECO:0000250"/>
    <property type="project" value="UniProtKB"/>
</dbReference>
<dbReference type="CDD" id="cd04077">
    <property type="entry name" value="Peptidases_S8_PCSK9_ProteinaseK_like"/>
    <property type="match status" value="1"/>
</dbReference>
<dbReference type="FunFam" id="3.40.50.200:FF:000007">
    <property type="entry name" value="Subtilisin-like serine protease"/>
    <property type="match status" value="1"/>
</dbReference>
<dbReference type="Gene3D" id="3.40.50.200">
    <property type="entry name" value="Peptidase S8/S53 domain"/>
    <property type="match status" value="1"/>
</dbReference>
<dbReference type="InterPro" id="IPR034193">
    <property type="entry name" value="PCSK9_ProteinaseK-like"/>
</dbReference>
<dbReference type="InterPro" id="IPR000209">
    <property type="entry name" value="Peptidase_S8/S53_dom"/>
</dbReference>
<dbReference type="InterPro" id="IPR036852">
    <property type="entry name" value="Peptidase_S8/S53_dom_sf"/>
</dbReference>
<dbReference type="InterPro" id="IPR023827">
    <property type="entry name" value="Peptidase_S8_Asp-AS"/>
</dbReference>
<dbReference type="InterPro" id="IPR022398">
    <property type="entry name" value="Peptidase_S8_His-AS"/>
</dbReference>
<dbReference type="InterPro" id="IPR023828">
    <property type="entry name" value="Peptidase_S8_Ser-AS"/>
</dbReference>
<dbReference type="InterPro" id="IPR050131">
    <property type="entry name" value="Peptidase_S8_subtilisin-like"/>
</dbReference>
<dbReference type="InterPro" id="IPR015500">
    <property type="entry name" value="Peptidase_S8_subtilisin-rel"/>
</dbReference>
<dbReference type="PANTHER" id="PTHR43806:SF11">
    <property type="entry name" value="CEREVISIN-RELATED"/>
    <property type="match status" value="1"/>
</dbReference>
<dbReference type="PANTHER" id="PTHR43806">
    <property type="entry name" value="PEPTIDASE S8"/>
    <property type="match status" value="1"/>
</dbReference>
<dbReference type="Pfam" id="PF00082">
    <property type="entry name" value="Peptidase_S8"/>
    <property type="match status" value="1"/>
</dbReference>
<dbReference type="PRINTS" id="PR00723">
    <property type="entry name" value="SUBTILISIN"/>
</dbReference>
<dbReference type="SUPFAM" id="SSF52743">
    <property type="entry name" value="Subtilisin-like"/>
    <property type="match status" value="1"/>
</dbReference>
<dbReference type="PROSITE" id="PS51892">
    <property type="entry name" value="SUBTILASE"/>
    <property type="match status" value="1"/>
</dbReference>
<dbReference type="PROSITE" id="PS00136">
    <property type="entry name" value="SUBTILASE_ASP"/>
    <property type="match status" value="1"/>
</dbReference>
<dbReference type="PROSITE" id="PS00137">
    <property type="entry name" value="SUBTILASE_HIS"/>
    <property type="match status" value="1"/>
</dbReference>
<dbReference type="PROSITE" id="PS00138">
    <property type="entry name" value="SUBTILASE_SER"/>
    <property type="match status" value="1"/>
</dbReference>
<reference evidence="10" key="1">
    <citation type="journal article" date="2005" name="Int. Arch. Allergy Immunol.">
        <title>A vacuolar serine protease (Rho m 2) is a major allergen of Rhodotorula mucilaginosa and belongs to a class of highly conserved pan-fungal allergens.</title>
        <authorList>
            <person name="Chou H."/>
            <person name="Tam M.F."/>
            <person name="Lee S.S."/>
            <person name="Tai H.Y."/>
            <person name="Chang C.Y."/>
            <person name="Chou C.T."/>
            <person name="Shen H.D."/>
        </authorList>
    </citation>
    <scope>NUCLEOTIDE SEQUENCE [MRNA]</scope>
    <scope>PROTEIN SEQUENCE OF 31-39; 125-132; 136-147; 165-175 AND 231-238</scope>
    <scope>ALLERGEN</scope>
</reference>
<keyword id="KW-0020">Allergen</keyword>
<keyword id="KW-0903">Direct protein sequencing</keyword>
<keyword id="KW-0325">Glycoprotein</keyword>
<keyword id="KW-0378">Hydrolase</keyword>
<keyword id="KW-0645">Protease</keyword>
<keyword id="KW-0720">Serine protease</keyword>
<keyword id="KW-0865">Zymogen</keyword>
<comment type="function">
    <text evidence="1">Serine protease.</text>
</comment>
<comment type="allergen">
    <text evidence="6">Causes an allergic reaction in human. Binds to IgE in 57% of 44 patients suffering from bronchial asthma.</text>
</comment>
<comment type="similarity">
    <text evidence="2 5 8">Belongs to the peptidase S8 family.</text>
</comment>
<accession>Q32ZM1</accession>
<proteinExistence type="evidence at protein level"/>